<protein>
    <recommendedName>
        <fullName evidence="2">Glutamate/aspartate import ATP-binding protein GltL</fullName>
        <ecNumber evidence="3">7.4.2.1</ecNumber>
    </recommendedName>
</protein>
<sequence>MITLKNVSKWYGHFQVLTDCSTEVKKGEVVVVCGPSGSGKSTLIKTVNGLEPVQQGEITVDGIVVNDKKTDLAKLRSRVGMVFQHFELFPHLSIIENLTLAQVKVLKRDKAPAREKALKLLERVGLSAHANKFPAQLSGGQQQRVAIARALCMDPIAMLFDEPTSALDPEMINEVLDVMVELANEGMTMMVVTHEMGFARKVANRVIFMDEGKIVEDSPKDAFFDDPKSDRAKDFLAKILH</sequence>
<keyword id="KW-0029">Amino-acid transport</keyword>
<keyword id="KW-0067">ATP-binding</keyword>
<keyword id="KW-0997">Cell inner membrane</keyword>
<keyword id="KW-1003">Cell membrane</keyword>
<keyword id="KW-0472">Membrane</keyword>
<keyword id="KW-0547">Nucleotide-binding</keyword>
<keyword id="KW-1185">Reference proteome</keyword>
<keyword id="KW-1278">Translocase</keyword>
<keyword id="KW-0813">Transport</keyword>
<accession>P0AAG3</accession>
<accession>P41076</accession>
<organism>
    <name type="scientific">Escherichia coli (strain K12)</name>
    <dbReference type="NCBI Taxonomy" id="83333"/>
    <lineage>
        <taxon>Bacteria</taxon>
        <taxon>Pseudomonadati</taxon>
        <taxon>Pseudomonadota</taxon>
        <taxon>Gammaproteobacteria</taxon>
        <taxon>Enterobacterales</taxon>
        <taxon>Enterobacteriaceae</taxon>
        <taxon>Escherichia</taxon>
    </lineage>
</organism>
<feature type="chain" id="PRO_0000092335" description="Glutamate/aspartate import ATP-binding protein GltL">
    <location>
        <begin position="1"/>
        <end position="241"/>
    </location>
</feature>
<feature type="domain" description="ABC transporter" evidence="1">
    <location>
        <begin position="2"/>
        <end position="236"/>
    </location>
</feature>
<feature type="binding site" evidence="1">
    <location>
        <begin position="34"/>
        <end position="41"/>
    </location>
    <ligand>
        <name>ATP</name>
        <dbReference type="ChEBI" id="CHEBI:30616"/>
    </ligand>
</feature>
<dbReference type="EC" id="7.4.2.1" evidence="3"/>
<dbReference type="EMBL" id="U10981">
    <property type="protein sequence ID" value="AAA60982.1"/>
    <property type="molecule type" value="Genomic_DNA"/>
</dbReference>
<dbReference type="EMBL" id="U82598">
    <property type="protein sequence ID" value="AAB40853.1"/>
    <property type="molecule type" value="Genomic_DNA"/>
</dbReference>
<dbReference type="EMBL" id="U00096">
    <property type="protein sequence ID" value="AAC73753.1"/>
    <property type="molecule type" value="Genomic_DNA"/>
</dbReference>
<dbReference type="EMBL" id="AP009048">
    <property type="protein sequence ID" value="BAA35304.1"/>
    <property type="molecule type" value="Genomic_DNA"/>
</dbReference>
<dbReference type="PIR" id="B64800">
    <property type="entry name" value="B64800"/>
</dbReference>
<dbReference type="RefSeq" id="NP_415185.1">
    <property type="nucleotide sequence ID" value="NC_000913.3"/>
</dbReference>
<dbReference type="RefSeq" id="WP_000631384.1">
    <property type="nucleotide sequence ID" value="NZ_SSZK01000037.1"/>
</dbReference>
<dbReference type="SMR" id="P0AAG3"/>
<dbReference type="BioGRID" id="4259911">
    <property type="interactions" value="28"/>
</dbReference>
<dbReference type="BioGRID" id="849636">
    <property type="interactions" value="1"/>
</dbReference>
<dbReference type="ComplexPortal" id="CPX-4324">
    <property type="entry name" value="Glutamate/aspartate ABC transporter complex"/>
</dbReference>
<dbReference type="DIP" id="DIP-48246N"/>
<dbReference type="FunCoup" id="P0AAG3">
    <property type="interactions" value="473"/>
</dbReference>
<dbReference type="IntAct" id="P0AAG3">
    <property type="interactions" value="6"/>
</dbReference>
<dbReference type="STRING" id="511145.b0652"/>
<dbReference type="TCDB" id="3.A.1.3.4">
    <property type="family name" value="the atp-binding cassette (abc) superfamily"/>
</dbReference>
<dbReference type="jPOST" id="P0AAG3"/>
<dbReference type="PaxDb" id="511145-b0652"/>
<dbReference type="EnsemblBacteria" id="AAC73753">
    <property type="protein sequence ID" value="AAC73753"/>
    <property type="gene ID" value="b0652"/>
</dbReference>
<dbReference type="GeneID" id="93776830"/>
<dbReference type="GeneID" id="945254"/>
<dbReference type="KEGG" id="ecj:JW0647"/>
<dbReference type="KEGG" id="eco:b0652"/>
<dbReference type="KEGG" id="ecoc:C3026_03260"/>
<dbReference type="PATRIC" id="fig|1411691.4.peg.1616"/>
<dbReference type="EchoBASE" id="EB2529"/>
<dbReference type="eggNOG" id="COG1126">
    <property type="taxonomic scope" value="Bacteria"/>
</dbReference>
<dbReference type="HOGENOM" id="CLU_000604_1_22_6"/>
<dbReference type="InParanoid" id="P0AAG3"/>
<dbReference type="OMA" id="IFMDKGS"/>
<dbReference type="OrthoDB" id="9802264at2"/>
<dbReference type="PhylomeDB" id="P0AAG3"/>
<dbReference type="BioCyc" id="EcoCyc:GLTL-MONOMER"/>
<dbReference type="BioCyc" id="MetaCyc:GLTL-MONOMER"/>
<dbReference type="PRO" id="PR:P0AAG3"/>
<dbReference type="Proteomes" id="UP000000625">
    <property type="component" value="Chromosome"/>
</dbReference>
<dbReference type="GO" id="GO:0055052">
    <property type="term" value="C:ATP-binding cassette (ABC) transporter complex, substrate-binding subunit-containing"/>
    <property type="evidence" value="ECO:0000303"/>
    <property type="project" value="ComplexPortal"/>
</dbReference>
<dbReference type="GO" id="GO:0016020">
    <property type="term" value="C:membrane"/>
    <property type="evidence" value="ECO:0000303"/>
    <property type="project" value="ComplexPortal"/>
</dbReference>
<dbReference type="GO" id="GO:0005524">
    <property type="term" value="F:ATP binding"/>
    <property type="evidence" value="ECO:0000255"/>
    <property type="project" value="EcoCyc"/>
</dbReference>
<dbReference type="GO" id="GO:0016887">
    <property type="term" value="F:ATP hydrolysis activity"/>
    <property type="evidence" value="ECO:0007669"/>
    <property type="project" value="InterPro"/>
</dbReference>
<dbReference type="GO" id="GO:0102013">
    <property type="term" value="F:ATPase-coupled L-glutamate tranmembrane transporter activity"/>
    <property type="evidence" value="ECO:0007669"/>
    <property type="project" value="RHEA"/>
</dbReference>
<dbReference type="GO" id="GO:0140009">
    <property type="term" value="P:L-aspartate import across plasma membrane"/>
    <property type="evidence" value="ECO:0000303"/>
    <property type="project" value="ComplexPortal"/>
</dbReference>
<dbReference type="GO" id="GO:0098712">
    <property type="term" value="P:L-glutamate import across plasma membrane"/>
    <property type="evidence" value="ECO:0000303"/>
    <property type="project" value="ComplexPortal"/>
</dbReference>
<dbReference type="CDD" id="cd03262">
    <property type="entry name" value="ABC_HisP_GlnQ"/>
    <property type="match status" value="1"/>
</dbReference>
<dbReference type="FunFam" id="3.40.50.300:FF:000020">
    <property type="entry name" value="Amino acid ABC transporter ATP-binding component"/>
    <property type="match status" value="1"/>
</dbReference>
<dbReference type="Gene3D" id="3.40.50.300">
    <property type="entry name" value="P-loop containing nucleotide triphosphate hydrolases"/>
    <property type="match status" value="1"/>
</dbReference>
<dbReference type="InterPro" id="IPR003593">
    <property type="entry name" value="AAA+_ATPase"/>
</dbReference>
<dbReference type="InterPro" id="IPR030679">
    <property type="entry name" value="ABC_ATPase_HisP-typ"/>
</dbReference>
<dbReference type="InterPro" id="IPR003439">
    <property type="entry name" value="ABC_transporter-like_ATP-bd"/>
</dbReference>
<dbReference type="InterPro" id="IPR017871">
    <property type="entry name" value="ABC_transporter-like_CS"/>
</dbReference>
<dbReference type="InterPro" id="IPR050086">
    <property type="entry name" value="MetN_ABC_transporter-like"/>
</dbReference>
<dbReference type="InterPro" id="IPR027417">
    <property type="entry name" value="P-loop_NTPase"/>
</dbReference>
<dbReference type="PANTHER" id="PTHR43166">
    <property type="entry name" value="AMINO ACID IMPORT ATP-BINDING PROTEIN"/>
    <property type="match status" value="1"/>
</dbReference>
<dbReference type="PANTHER" id="PTHR43166:SF9">
    <property type="entry name" value="GLUTAMATE_ASPARTATE IMPORT ATP-BINDING PROTEIN GLTL"/>
    <property type="match status" value="1"/>
</dbReference>
<dbReference type="Pfam" id="PF00005">
    <property type="entry name" value="ABC_tran"/>
    <property type="match status" value="1"/>
</dbReference>
<dbReference type="PIRSF" id="PIRSF039085">
    <property type="entry name" value="ABC_ATPase_HisP"/>
    <property type="match status" value="1"/>
</dbReference>
<dbReference type="SMART" id="SM00382">
    <property type="entry name" value="AAA"/>
    <property type="match status" value="1"/>
</dbReference>
<dbReference type="SUPFAM" id="SSF52540">
    <property type="entry name" value="P-loop containing nucleoside triphosphate hydrolases"/>
    <property type="match status" value="1"/>
</dbReference>
<dbReference type="PROSITE" id="PS00211">
    <property type="entry name" value="ABC_TRANSPORTER_1"/>
    <property type="match status" value="1"/>
</dbReference>
<dbReference type="PROSITE" id="PS50893">
    <property type="entry name" value="ABC_TRANSPORTER_2"/>
    <property type="match status" value="1"/>
</dbReference>
<comment type="function">
    <text evidence="3">Part of the ABC transporter complex GltIJKL involved in glutamate and aspartate uptake. Probably responsible for energy coupling to the transport system.</text>
</comment>
<comment type="catalytic activity">
    <reaction evidence="3">
        <text>a polar amino acid(out) + ATP + H2O = a polar amino acid(in) + ADP + phosphate + H(+)</text>
        <dbReference type="Rhea" id="RHEA:14673"/>
        <dbReference type="ChEBI" id="CHEBI:15377"/>
        <dbReference type="ChEBI" id="CHEBI:15378"/>
        <dbReference type="ChEBI" id="CHEBI:30616"/>
        <dbReference type="ChEBI" id="CHEBI:43474"/>
        <dbReference type="ChEBI" id="CHEBI:62031"/>
        <dbReference type="ChEBI" id="CHEBI:456216"/>
        <dbReference type="EC" id="7.4.2.1"/>
    </reaction>
    <physiologicalReaction direction="left-to-right" evidence="3">
        <dbReference type="Rhea" id="RHEA:14674"/>
    </physiologicalReaction>
</comment>
<comment type="catalytic activity">
    <reaction evidence="3">
        <text>L-glutamate(out) + ATP + H2O = L-glutamate(in) + ADP + phosphate + H(+)</text>
        <dbReference type="Rhea" id="RHEA:29035"/>
        <dbReference type="ChEBI" id="CHEBI:15377"/>
        <dbReference type="ChEBI" id="CHEBI:15378"/>
        <dbReference type="ChEBI" id="CHEBI:29985"/>
        <dbReference type="ChEBI" id="CHEBI:30616"/>
        <dbReference type="ChEBI" id="CHEBI:43474"/>
        <dbReference type="ChEBI" id="CHEBI:456216"/>
    </reaction>
    <physiologicalReaction direction="left-to-right" evidence="3">
        <dbReference type="Rhea" id="RHEA:29036"/>
    </physiologicalReaction>
</comment>
<comment type="catalytic activity">
    <reaction evidence="3">
        <text>L-aspartate(out) + ATP + H2O = L-aspartate(in) + ADP + phosphate + H(+)</text>
        <dbReference type="Rhea" id="RHEA:29039"/>
        <dbReference type="ChEBI" id="CHEBI:15377"/>
        <dbReference type="ChEBI" id="CHEBI:15378"/>
        <dbReference type="ChEBI" id="CHEBI:29991"/>
        <dbReference type="ChEBI" id="CHEBI:30616"/>
        <dbReference type="ChEBI" id="CHEBI:43474"/>
        <dbReference type="ChEBI" id="CHEBI:456216"/>
    </reaction>
    <physiologicalReaction direction="left-to-right" evidence="3">
        <dbReference type="Rhea" id="RHEA:29040"/>
    </physiologicalReaction>
</comment>
<comment type="subunit">
    <text evidence="3">The complex is composed of two ATP-binding proteins (GltL), two transmembrane proteins (GltJ and GltK) and a solute-binding protein (GltI).</text>
</comment>
<comment type="subcellular location">
    <subcellularLocation>
        <location evidence="3">Cell inner membrane</location>
        <topology evidence="3">Peripheral membrane protein</topology>
    </subcellularLocation>
</comment>
<comment type="similarity">
    <text evidence="2">Belongs to the ABC transporter superfamily.</text>
</comment>
<proteinExistence type="inferred from homology"/>
<gene>
    <name type="primary">gltL</name>
    <name type="ordered locus">b0652</name>
    <name type="ordered locus">JW0647</name>
</gene>
<name>GLTL_ECOLI</name>
<reference key="1">
    <citation type="submission" date="1994-06" db="EMBL/GenBank/DDBJ databases">
        <title>Sequence and characterisation of three genes of a glutamate-aspartate binding protein-dependent transport system of Escherichia coli K12.</title>
        <authorList>
            <person name="Lum D."/>
            <person name="Wallace B.J."/>
        </authorList>
    </citation>
    <scope>NUCLEOTIDE SEQUENCE [GENOMIC DNA]</scope>
    <source>
        <strain>K12 / BK9MDG</strain>
    </source>
</reference>
<reference key="2">
    <citation type="journal article" date="1996" name="DNA Res.">
        <title>A 718-kb DNA sequence of the Escherichia coli K-12 genome corresponding to the 12.7-28.0 min region on the linkage map.</title>
        <authorList>
            <person name="Oshima T."/>
            <person name="Aiba H."/>
            <person name="Baba T."/>
            <person name="Fujita K."/>
            <person name="Hayashi K."/>
            <person name="Honjo A."/>
            <person name="Ikemoto K."/>
            <person name="Inada T."/>
            <person name="Itoh T."/>
            <person name="Kajihara M."/>
            <person name="Kanai K."/>
            <person name="Kashimoto K."/>
            <person name="Kimura S."/>
            <person name="Kitagawa M."/>
            <person name="Makino K."/>
            <person name="Masuda S."/>
            <person name="Miki T."/>
            <person name="Mizobuchi K."/>
            <person name="Mori H."/>
            <person name="Motomura K."/>
            <person name="Nakamura Y."/>
            <person name="Nashimoto H."/>
            <person name="Nishio Y."/>
            <person name="Saito N."/>
            <person name="Sampei G."/>
            <person name="Seki Y."/>
            <person name="Tagami H."/>
            <person name="Takemoto K."/>
            <person name="Wada C."/>
            <person name="Yamamoto Y."/>
            <person name="Yano M."/>
            <person name="Horiuchi T."/>
        </authorList>
    </citation>
    <scope>NUCLEOTIDE SEQUENCE [LARGE SCALE GENOMIC DNA]</scope>
    <source>
        <strain>K12 / W3110 / ATCC 27325 / DSM 5911</strain>
    </source>
</reference>
<reference key="3">
    <citation type="submission" date="1997-01" db="EMBL/GenBank/DDBJ databases">
        <title>Sequence of minutes 4-25 of Escherichia coli.</title>
        <authorList>
            <person name="Chung E."/>
            <person name="Allen E."/>
            <person name="Araujo R."/>
            <person name="Aparicio A.M."/>
            <person name="Davis K."/>
            <person name="Duncan M."/>
            <person name="Federspiel N."/>
            <person name="Hyman R."/>
            <person name="Kalman S."/>
            <person name="Komp C."/>
            <person name="Kurdi O."/>
            <person name="Lew H."/>
            <person name="Lin D."/>
            <person name="Namath A."/>
            <person name="Oefner P."/>
            <person name="Roberts D."/>
            <person name="Schramm S."/>
            <person name="Davis R.W."/>
        </authorList>
    </citation>
    <scope>NUCLEOTIDE SEQUENCE [LARGE SCALE GENOMIC DNA]</scope>
    <source>
        <strain>K12 / MG1655 / ATCC 47076</strain>
    </source>
</reference>
<reference key="4">
    <citation type="journal article" date="1997" name="Science">
        <title>The complete genome sequence of Escherichia coli K-12.</title>
        <authorList>
            <person name="Blattner F.R."/>
            <person name="Plunkett G. III"/>
            <person name="Bloch C.A."/>
            <person name="Perna N.T."/>
            <person name="Burland V."/>
            <person name="Riley M."/>
            <person name="Collado-Vides J."/>
            <person name="Glasner J.D."/>
            <person name="Rode C.K."/>
            <person name="Mayhew G.F."/>
            <person name="Gregor J."/>
            <person name="Davis N.W."/>
            <person name="Kirkpatrick H.A."/>
            <person name="Goeden M.A."/>
            <person name="Rose D.J."/>
            <person name="Mau B."/>
            <person name="Shao Y."/>
        </authorList>
    </citation>
    <scope>NUCLEOTIDE SEQUENCE [LARGE SCALE GENOMIC DNA]</scope>
    <source>
        <strain>K12 / MG1655 / ATCC 47076</strain>
    </source>
</reference>
<reference key="5">
    <citation type="journal article" date="2006" name="Mol. Syst. Biol.">
        <title>Highly accurate genome sequences of Escherichia coli K-12 strains MG1655 and W3110.</title>
        <authorList>
            <person name="Hayashi K."/>
            <person name="Morooka N."/>
            <person name="Yamamoto Y."/>
            <person name="Fujita K."/>
            <person name="Isono K."/>
            <person name="Choi S."/>
            <person name="Ohtsubo E."/>
            <person name="Baba T."/>
            <person name="Wanner B.L."/>
            <person name="Mori H."/>
            <person name="Horiuchi T."/>
        </authorList>
    </citation>
    <scope>NUCLEOTIDE SEQUENCE [LARGE SCALE GENOMIC DNA]</scope>
    <source>
        <strain>K12 / W3110 / ATCC 27325 / DSM 5911</strain>
    </source>
</reference>
<reference key="6">
    <citation type="journal article" date="1998" name="Mol. Microbiol.">
        <title>The Escherichia coli ATP-binding cassette (ABC) proteins.</title>
        <authorList>
            <person name="Linton K.J."/>
            <person name="Higgins C.F."/>
        </authorList>
    </citation>
    <scope>REVIEW</scope>
</reference>
<evidence type="ECO:0000255" key="1">
    <source>
        <dbReference type="PROSITE-ProRule" id="PRU00434"/>
    </source>
</evidence>
<evidence type="ECO:0000305" key="2"/>
<evidence type="ECO:0000305" key="3">
    <source>
    </source>
</evidence>